<evidence type="ECO:0000250" key="1">
    <source>
        <dbReference type="UniProtKB" id="Q9BTA9"/>
    </source>
</evidence>
<evidence type="ECO:0000255" key="2"/>
<evidence type="ECO:0000255" key="3">
    <source>
        <dbReference type="PROSITE-ProRule" id="PRU00224"/>
    </source>
</evidence>
<evidence type="ECO:0000256" key="4">
    <source>
        <dbReference type="SAM" id="MobiDB-lite"/>
    </source>
</evidence>
<evidence type="ECO:0000305" key="5"/>
<dbReference type="EMBL" id="AY576994">
    <property type="protein sequence ID" value="AAS92632.1"/>
    <property type="molecule type" value="mRNA"/>
</dbReference>
<dbReference type="EMBL" id="BC048888">
    <property type="protein sequence ID" value="AAH48888.1"/>
    <property type="molecule type" value="mRNA"/>
</dbReference>
<dbReference type="RefSeq" id="NP_955954.1">
    <property type="nucleotide sequence ID" value="NM_199660.1"/>
</dbReference>
<dbReference type="SMR" id="Q7ZUK7"/>
<dbReference type="FunCoup" id="Q7ZUK7">
    <property type="interactions" value="3299"/>
</dbReference>
<dbReference type="STRING" id="7955.ENSDARP00000073355"/>
<dbReference type="PaxDb" id="7955-ENSDARP00000073355"/>
<dbReference type="GeneID" id="323904"/>
<dbReference type="KEGG" id="dre:323904"/>
<dbReference type="AGR" id="ZFIN:ZDB-GENE-030131-2624"/>
<dbReference type="CTD" id="323904"/>
<dbReference type="ZFIN" id="ZDB-GENE-030131-2624">
    <property type="gene designation" value="waca"/>
</dbReference>
<dbReference type="eggNOG" id="KOG0152">
    <property type="taxonomic scope" value="Eukaryota"/>
</dbReference>
<dbReference type="InParanoid" id="Q7ZUK7"/>
<dbReference type="OrthoDB" id="10072039at2759"/>
<dbReference type="PhylomeDB" id="Q7ZUK7"/>
<dbReference type="PRO" id="PR:Q7ZUK7"/>
<dbReference type="Proteomes" id="UP000000437">
    <property type="component" value="Chromosome 12"/>
</dbReference>
<dbReference type="GO" id="GO:0005634">
    <property type="term" value="C:nucleus"/>
    <property type="evidence" value="ECO:0000318"/>
    <property type="project" value="GO_Central"/>
</dbReference>
<dbReference type="GO" id="GO:0003682">
    <property type="term" value="F:chromatin binding"/>
    <property type="evidence" value="ECO:0000250"/>
    <property type="project" value="UniProtKB"/>
</dbReference>
<dbReference type="GO" id="GO:0000993">
    <property type="term" value="F:RNA polymerase II complex binding"/>
    <property type="evidence" value="ECO:0000250"/>
    <property type="project" value="UniProtKB"/>
</dbReference>
<dbReference type="GO" id="GO:0006338">
    <property type="term" value="P:chromatin remodeling"/>
    <property type="evidence" value="ECO:0000250"/>
    <property type="project" value="UniProtKB"/>
</dbReference>
<dbReference type="GO" id="GO:0006974">
    <property type="term" value="P:DNA damage response"/>
    <property type="evidence" value="ECO:0000250"/>
    <property type="project" value="UniProtKB"/>
</dbReference>
<dbReference type="GO" id="GO:0031571">
    <property type="term" value="P:mitotic G1 DNA damage checkpoint signaling"/>
    <property type="evidence" value="ECO:0000250"/>
    <property type="project" value="UniProtKB"/>
</dbReference>
<dbReference type="GO" id="GO:0045893">
    <property type="term" value="P:positive regulation of DNA-templated transcription"/>
    <property type="evidence" value="ECO:0000250"/>
    <property type="project" value="UniProtKB"/>
</dbReference>
<dbReference type="GO" id="GO:1904263">
    <property type="term" value="P:positive regulation of TORC1 signaling"/>
    <property type="evidence" value="ECO:0000318"/>
    <property type="project" value="GO_Central"/>
</dbReference>
<dbReference type="GO" id="GO:0010506">
    <property type="term" value="P:regulation of autophagy"/>
    <property type="evidence" value="ECO:0000318"/>
    <property type="project" value="GO_Central"/>
</dbReference>
<dbReference type="CDD" id="cd00201">
    <property type="entry name" value="WW"/>
    <property type="match status" value="1"/>
</dbReference>
<dbReference type="FunFam" id="2.20.70.10:FF:000020">
    <property type="entry name" value="WW domain-containing adapter protein with coiled-coil isoform X1"/>
    <property type="match status" value="1"/>
</dbReference>
<dbReference type="Gene3D" id="2.20.70.10">
    <property type="match status" value="1"/>
</dbReference>
<dbReference type="InterPro" id="IPR038867">
    <property type="entry name" value="WAC"/>
</dbReference>
<dbReference type="InterPro" id="IPR001202">
    <property type="entry name" value="WW_dom"/>
</dbReference>
<dbReference type="InterPro" id="IPR036020">
    <property type="entry name" value="WW_dom_sf"/>
</dbReference>
<dbReference type="PANTHER" id="PTHR15911">
    <property type="entry name" value="WW DOMAIN-CONTAINING ADAPTER PROTEIN WITH COILED-COIL"/>
    <property type="match status" value="1"/>
</dbReference>
<dbReference type="PANTHER" id="PTHR15911:SF6">
    <property type="entry name" value="WW DOMAIN-CONTAINING ADAPTER PROTEIN WITH COILED-COIL"/>
    <property type="match status" value="1"/>
</dbReference>
<dbReference type="Pfam" id="PF00397">
    <property type="entry name" value="WW"/>
    <property type="match status" value="1"/>
</dbReference>
<dbReference type="SMART" id="SM00456">
    <property type="entry name" value="WW"/>
    <property type="match status" value="1"/>
</dbReference>
<dbReference type="SUPFAM" id="SSF51045">
    <property type="entry name" value="WW domain"/>
    <property type="match status" value="1"/>
</dbReference>
<dbReference type="PROSITE" id="PS01159">
    <property type="entry name" value="WW_DOMAIN_1"/>
    <property type="match status" value="1"/>
</dbReference>
<dbReference type="PROSITE" id="PS50020">
    <property type="entry name" value="WW_DOMAIN_2"/>
    <property type="match status" value="1"/>
</dbReference>
<name>WAC_DANRE</name>
<accession>Q7ZUK7</accession>
<accession>Q6PUS1</accession>
<protein>
    <recommendedName>
        <fullName>WW domain-containing adapter protein with coiled-coil</fullName>
    </recommendedName>
</protein>
<reference key="1">
    <citation type="journal article" date="2004" name="Proc. Natl. Acad. Sci. U.S.A.">
        <title>Hematopoietic gene expression profile in zebrafish kidney marrow.</title>
        <authorList>
            <person name="Song H.-D."/>
            <person name="Sun X.-J."/>
            <person name="Deng M."/>
            <person name="Zhang G.-W."/>
            <person name="Zhou Y."/>
            <person name="Wu X.-Y."/>
            <person name="Sheng Y."/>
            <person name="Chen Y."/>
            <person name="Ruan Z."/>
            <person name="Jiang C.-L."/>
            <person name="Fan H.-Y."/>
            <person name="Zon L.I."/>
            <person name="Kanki J.P."/>
            <person name="Liu T.X."/>
            <person name="Look A.T."/>
            <person name="Chen Z."/>
        </authorList>
    </citation>
    <scope>NUCLEOTIDE SEQUENCE [LARGE SCALE MRNA]</scope>
    <source>
        <tissue>Kidney marrow</tissue>
    </source>
</reference>
<reference key="2">
    <citation type="submission" date="2003-03" db="EMBL/GenBank/DDBJ databases">
        <authorList>
            <consortium name="NIH - Zebrafish Gene Collection (ZGC) project"/>
        </authorList>
    </citation>
    <scope>NUCLEOTIDE SEQUENCE [LARGE SCALE MRNA]</scope>
    <source>
        <strain>AB</strain>
    </source>
</reference>
<comment type="function">
    <text evidence="1">Acts as a linker between gene transcription and histone H2B monoubiquitination at 'Lys-120' (H2BK120ub1). Positive regulator of amino acid starvation-induced autophagy. Positively regulates MTOR activity. May negatively regulate the ubiquitin proteasome pathway.</text>
</comment>
<comment type="subcellular location">
    <subcellularLocation>
        <location evidence="1">Nucleus</location>
    </subcellularLocation>
</comment>
<feature type="chain" id="PRO_0000406981" description="WW domain-containing adapter protein with coiled-coil">
    <location>
        <begin position="1"/>
        <end position="558"/>
    </location>
</feature>
<feature type="domain" description="WW" evidence="3">
    <location>
        <begin position="120"/>
        <end position="153"/>
    </location>
</feature>
<feature type="region of interest" description="Disordered" evidence="4">
    <location>
        <begin position="1"/>
        <end position="129"/>
    </location>
</feature>
<feature type="region of interest" description="Disordered" evidence="4">
    <location>
        <begin position="159"/>
        <end position="244"/>
    </location>
</feature>
<feature type="region of interest" description="Disordered" evidence="4">
    <location>
        <begin position="321"/>
        <end position="461"/>
    </location>
</feature>
<feature type="coiled-coil region" evidence="2">
    <location>
        <begin position="529"/>
        <end position="555"/>
    </location>
</feature>
<feature type="compositionally biased region" description="Polar residues" evidence="4">
    <location>
        <begin position="22"/>
        <end position="32"/>
    </location>
</feature>
<feature type="compositionally biased region" description="Basic and acidic residues" evidence="4">
    <location>
        <begin position="33"/>
        <end position="46"/>
    </location>
</feature>
<feature type="compositionally biased region" description="Basic and acidic residues" evidence="4">
    <location>
        <begin position="56"/>
        <end position="70"/>
    </location>
</feature>
<feature type="compositionally biased region" description="Basic residues" evidence="4">
    <location>
        <begin position="72"/>
        <end position="82"/>
    </location>
</feature>
<feature type="compositionally biased region" description="Low complexity" evidence="4">
    <location>
        <begin position="99"/>
        <end position="116"/>
    </location>
</feature>
<feature type="compositionally biased region" description="Basic and acidic residues" evidence="4">
    <location>
        <begin position="175"/>
        <end position="184"/>
    </location>
</feature>
<feature type="compositionally biased region" description="Polar residues" evidence="4">
    <location>
        <begin position="188"/>
        <end position="200"/>
    </location>
</feature>
<feature type="compositionally biased region" description="Low complexity" evidence="4">
    <location>
        <begin position="204"/>
        <end position="217"/>
    </location>
</feature>
<feature type="compositionally biased region" description="Polar residues" evidence="4">
    <location>
        <begin position="223"/>
        <end position="234"/>
    </location>
</feature>
<feature type="compositionally biased region" description="Polar residues" evidence="4">
    <location>
        <begin position="321"/>
        <end position="378"/>
    </location>
</feature>
<feature type="compositionally biased region" description="Low complexity" evidence="4">
    <location>
        <begin position="402"/>
        <end position="431"/>
    </location>
</feature>
<feature type="compositionally biased region" description="Gly residues" evidence="4">
    <location>
        <begin position="432"/>
        <end position="443"/>
    </location>
</feature>
<feature type="sequence conflict" description="In Ref. 1; AAS92632." evidence="5" ref="1">
    <original>S</original>
    <variation>N</variation>
    <location>
        <position position="131"/>
    </location>
</feature>
<feature type="sequence conflict" description="In Ref. 1; AAS92632." evidence="5" ref="1">
    <original>Y</original>
    <variation>F</variation>
    <location>
        <position position="137"/>
    </location>
</feature>
<feature type="sequence conflict" description="In Ref. 1; AAS92632." evidence="5" ref="1">
    <original>E</original>
    <variation>K</variation>
    <location>
        <position position="153"/>
    </location>
</feature>
<feature type="sequence conflict" description="In Ref. 1; AAS92632." evidence="5" ref="1">
    <original>D</original>
    <variation>N</variation>
    <location>
        <position position="220"/>
    </location>
</feature>
<feature type="sequence conflict" description="In Ref. 1; AAS92632." evidence="5" ref="1">
    <original>L</original>
    <variation>P</variation>
    <location>
        <position position="259"/>
    </location>
</feature>
<feature type="sequence conflict" description="In Ref. 1; AAS92632." evidence="5" ref="1">
    <original>S</original>
    <variation>T</variation>
    <location>
        <position position="312"/>
    </location>
</feature>
<feature type="sequence conflict" description="In Ref. 1; AAS92632." evidence="5" ref="1">
    <location>
        <position position="426"/>
    </location>
</feature>
<proteinExistence type="evidence at transcript level"/>
<organism>
    <name type="scientific">Danio rerio</name>
    <name type="common">Zebrafish</name>
    <name type="synonym">Brachydanio rerio</name>
    <dbReference type="NCBI Taxonomy" id="7955"/>
    <lineage>
        <taxon>Eukaryota</taxon>
        <taxon>Metazoa</taxon>
        <taxon>Chordata</taxon>
        <taxon>Craniata</taxon>
        <taxon>Vertebrata</taxon>
        <taxon>Euteleostomi</taxon>
        <taxon>Actinopterygii</taxon>
        <taxon>Neopterygii</taxon>
        <taxon>Teleostei</taxon>
        <taxon>Ostariophysi</taxon>
        <taxon>Cypriniformes</taxon>
        <taxon>Danionidae</taxon>
        <taxon>Danioninae</taxon>
        <taxon>Danio</taxon>
    </lineage>
</organism>
<sequence length="558" mass="60592">MVMYARKQPRLGDGCTDRRDSQPYQTLKYSSKSHPDHRHEKMRDSNDATPPCKMLRRSDSPDNKHMDNTGHGRAKAIHPHRGREREGGTSISPQENSHNHSSLHSSNSHSNPNKSSDTPFEPADDWSEHISSSGKKYYYNCRTEVSQWEKPKEWLEREQRQKEATKTAAVVNSFPKDRDYRREAMQATPASYSSTKSSIATEKPSSLTPSSSSAAVSGLDVPNSASSASGSTVPVSPVMQSPAPPTLLQDPSLLRQLLLALQTALQLNNASVDMAKINEVLTAAVTQASLQSILHKILTAGPSAFNITTLLSQATQLSNQVAQQSSQSPMSLTSDASSPRSYVSPRISTPQTNTASLKPPLSTTPVSSQTKINAMTVKSSSLPPPSSQQPLSTEKHHDNGNSPRTLQRQSSQRSPSPGPNHMGSNSSSSSNNGGGGGGQGPGVVSGAMPPGSVPPGTAPGRATCSFTPTLAAHFNENLIKHVQGWPAEHVEKQASRLREEAHTMGSIYMSENCTELKNLRSLVRVCEIQATLREQRILFLRQQIKELEKLKNQNSFMV</sequence>
<gene>
    <name type="primary">waca</name>
    <name type="synonym">wac</name>
</gene>
<keyword id="KW-0156">Chromatin regulator</keyword>
<keyword id="KW-0175">Coiled coil</keyword>
<keyword id="KW-0539">Nucleus</keyword>
<keyword id="KW-1185">Reference proteome</keyword>
<keyword id="KW-0804">Transcription</keyword>
<keyword id="KW-0805">Transcription regulation</keyword>